<protein>
    <recommendedName>
        <fullName evidence="1">Threonylcarbamoyl-AMP synthase</fullName>
        <shortName evidence="1">TC-AMP synthase</shortName>
        <ecNumber evidence="1">2.7.7.87</ecNumber>
    </recommendedName>
    <alternativeName>
        <fullName evidence="1">L-threonylcarbamoyladenylate synthase</fullName>
    </alternativeName>
    <alternativeName>
        <fullName evidence="1">t(6)A37 threonylcarbamoyladenosine biosynthesis protein TsaC</fullName>
    </alternativeName>
    <alternativeName>
        <fullName evidence="1">tRNA threonylcarbamoyladenosine biosynthesis protein TsaC</fullName>
    </alternativeName>
</protein>
<name>TSAC_HISS2</name>
<reference key="1">
    <citation type="submission" date="2008-02" db="EMBL/GenBank/DDBJ databases">
        <title>Complete sequence of Haemophilus somnus 2336.</title>
        <authorList>
            <consortium name="US DOE Joint Genome Institute"/>
            <person name="Siddaramappa S."/>
            <person name="Duncan A.J."/>
            <person name="Challacombe J.F."/>
            <person name="Rainey D."/>
            <person name="Gillaspy A.F."/>
            <person name="Carson M."/>
            <person name="Gipson J."/>
            <person name="Gipson M."/>
            <person name="Bruce D."/>
            <person name="Detter J.C."/>
            <person name="Han C.S."/>
            <person name="Land M."/>
            <person name="Tapia R."/>
            <person name="Thompson L.S."/>
            <person name="Orvis J."/>
            <person name="Zaitshik J."/>
            <person name="Barnes G."/>
            <person name="Brettin T.S."/>
            <person name="Dyer D.W."/>
            <person name="Inzana T.J."/>
        </authorList>
    </citation>
    <scope>NUCLEOTIDE SEQUENCE [LARGE SCALE GENOMIC DNA]</scope>
    <source>
        <strain>2336</strain>
    </source>
</reference>
<feature type="chain" id="PRO_0000352927" description="Threonylcarbamoyl-AMP synthase">
    <location>
        <begin position="1"/>
        <end position="183"/>
    </location>
</feature>
<feature type="domain" description="YrdC-like" evidence="1">
    <location>
        <begin position="1"/>
        <end position="183"/>
    </location>
</feature>
<keyword id="KW-0067">ATP-binding</keyword>
<keyword id="KW-0963">Cytoplasm</keyword>
<keyword id="KW-0547">Nucleotide-binding</keyword>
<keyword id="KW-0548">Nucleotidyltransferase</keyword>
<keyword id="KW-0808">Transferase</keyword>
<keyword id="KW-0819">tRNA processing</keyword>
<gene>
    <name evidence="1" type="primary">tsaC</name>
    <name type="synonym">rimN</name>
    <name type="ordered locus">HSM_1898</name>
</gene>
<organism>
    <name type="scientific">Histophilus somni (strain 2336)</name>
    <name type="common">Haemophilus somnus</name>
    <dbReference type="NCBI Taxonomy" id="228400"/>
    <lineage>
        <taxon>Bacteria</taxon>
        <taxon>Pseudomonadati</taxon>
        <taxon>Pseudomonadota</taxon>
        <taxon>Gammaproteobacteria</taxon>
        <taxon>Pasteurellales</taxon>
        <taxon>Pasteurellaceae</taxon>
        <taxon>Histophilus</taxon>
    </lineage>
</organism>
<proteinExistence type="inferred from homology"/>
<dbReference type="EC" id="2.7.7.87" evidence="1"/>
<dbReference type="EMBL" id="CP000947">
    <property type="protein sequence ID" value="ACA31686.1"/>
    <property type="molecule type" value="Genomic_DNA"/>
</dbReference>
<dbReference type="RefSeq" id="WP_012340981.1">
    <property type="nucleotide sequence ID" value="NC_010519.1"/>
</dbReference>
<dbReference type="SMR" id="B0UWV9"/>
<dbReference type="STRING" id="228400.HSM_1898"/>
<dbReference type="GeneID" id="31488209"/>
<dbReference type="KEGG" id="hsm:HSM_1898"/>
<dbReference type="HOGENOM" id="CLU_031397_6_0_6"/>
<dbReference type="GO" id="GO:0005737">
    <property type="term" value="C:cytoplasm"/>
    <property type="evidence" value="ECO:0007669"/>
    <property type="project" value="UniProtKB-SubCell"/>
</dbReference>
<dbReference type="GO" id="GO:0005524">
    <property type="term" value="F:ATP binding"/>
    <property type="evidence" value="ECO:0007669"/>
    <property type="project" value="UniProtKB-UniRule"/>
</dbReference>
<dbReference type="GO" id="GO:0003725">
    <property type="term" value="F:double-stranded RNA binding"/>
    <property type="evidence" value="ECO:0007669"/>
    <property type="project" value="InterPro"/>
</dbReference>
<dbReference type="GO" id="GO:0061710">
    <property type="term" value="F:L-threonylcarbamoyladenylate synthase"/>
    <property type="evidence" value="ECO:0007669"/>
    <property type="project" value="UniProtKB-EC"/>
</dbReference>
<dbReference type="GO" id="GO:0000049">
    <property type="term" value="F:tRNA binding"/>
    <property type="evidence" value="ECO:0007669"/>
    <property type="project" value="TreeGrafter"/>
</dbReference>
<dbReference type="GO" id="GO:0006450">
    <property type="term" value="P:regulation of translational fidelity"/>
    <property type="evidence" value="ECO:0007669"/>
    <property type="project" value="TreeGrafter"/>
</dbReference>
<dbReference type="GO" id="GO:0002949">
    <property type="term" value="P:tRNA threonylcarbamoyladenosine modification"/>
    <property type="evidence" value="ECO:0007669"/>
    <property type="project" value="UniProtKB-UniRule"/>
</dbReference>
<dbReference type="FunFam" id="3.90.870.10:FF:000004">
    <property type="entry name" value="Threonylcarbamoyl-AMP synthase"/>
    <property type="match status" value="1"/>
</dbReference>
<dbReference type="Gene3D" id="3.90.870.10">
    <property type="entry name" value="DHBP synthase"/>
    <property type="match status" value="1"/>
</dbReference>
<dbReference type="HAMAP" id="MF_01852">
    <property type="entry name" value="TsaC"/>
    <property type="match status" value="1"/>
</dbReference>
<dbReference type="InterPro" id="IPR017945">
    <property type="entry name" value="DHBP_synth_RibB-like_a/b_dom"/>
</dbReference>
<dbReference type="InterPro" id="IPR006070">
    <property type="entry name" value="Sua5-like_dom"/>
</dbReference>
<dbReference type="InterPro" id="IPR023535">
    <property type="entry name" value="TC-AMP_synthase"/>
</dbReference>
<dbReference type="InterPro" id="IPR050156">
    <property type="entry name" value="TC-AMP_synthase_SUA5"/>
</dbReference>
<dbReference type="PANTHER" id="PTHR17490">
    <property type="entry name" value="SUA5"/>
    <property type="match status" value="1"/>
</dbReference>
<dbReference type="PANTHER" id="PTHR17490:SF18">
    <property type="entry name" value="THREONYLCARBAMOYL-AMP SYNTHASE"/>
    <property type="match status" value="1"/>
</dbReference>
<dbReference type="Pfam" id="PF01300">
    <property type="entry name" value="Sua5_yciO_yrdC"/>
    <property type="match status" value="1"/>
</dbReference>
<dbReference type="SUPFAM" id="SSF55821">
    <property type="entry name" value="YrdC/RibB"/>
    <property type="match status" value="1"/>
</dbReference>
<dbReference type="PROSITE" id="PS51163">
    <property type="entry name" value="YRDC"/>
    <property type="match status" value="1"/>
</dbReference>
<sequence>MNITQIIEKLKQNEVVAYPTEAVFGLGCNPFSQSAVEKLLILKQRPREKGLILVAPKLDYFFSFIDKEQINSQHWQKLQQTYPRPITWIVPAKKDIAKFLCGNFNSIAIRVSQHPAIKILCEQTGFALTSTSANLSGIAPCKTSDEVRLQFGADFPVLDMSVGSATKPSEIRDLFTNQLVRQG</sequence>
<accession>B0UWV9</accession>
<evidence type="ECO:0000255" key="1">
    <source>
        <dbReference type="HAMAP-Rule" id="MF_01852"/>
    </source>
</evidence>
<comment type="function">
    <text evidence="1">Required for the formation of a threonylcarbamoyl group on adenosine at position 37 (t(6)A37) in tRNAs that read codons beginning with adenine. Catalyzes the conversion of L-threonine, HCO(3)(-)/CO(2) and ATP to give threonylcarbamoyl-AMP (TC-AMP) as the acyladenylate intermediate, with the release of diphosphate.</text>
</comment>
<comment type="catalytic activity">
    <reaction evidence="1">
        <text>L-threonine + hydrogencarbonate + ATP = L-threonylcarbamoyladenylate + diphosphate + H2O</text>
        <dbReference type="Rhea" id="RHEA:36407"/>
        <dbReference type="ChEBI" id="CHEBI:15377"/>
        <dbReference type="ChEBI" id="CHEBI:17544"/>
        <dbReference type="ChEBI" id="CHEBI:30616"/>
        <dbReference type="ChEBI" id="CHEBI:33019"/>
        <dbReference type="ChEBI" id="CHEBI:57926"/>
        <dbReference type="ChEBI" id="CHEBI:73682"/>
        <dbReference type="EC" id="2.7.7.87"/>
    </reaction>
</comment>
<comment type="subcellular location">
    <subcellularLocation>
        <location evidence="1">Cytoplasm</location>
    </subcellularLocation>
</comment>
<comment type="similarity">
    <text evidence="1">Belongs to the SUA5 family. TsaC subfamily.</text>
</comment>